<name>RL9_BACCR</name>
<reference key="1">
    <citation type="journal article" date="2003" name="Nature">
        <title>Genome sequence of Bacillus cereus and comparative analysis with Bacillus anthracis.</title>
        <authorList>
            <person name="Ivanova N."/>
            <person name="Sorokin A."/>
            <person name="Anderson I."/>
            <person name="Galleron N."/>
            <person name="Candelon B."/>
            <person name="Kapatral V."/>
            <person name="Bhattacharyya A."/>
            <person name="Reznik G."/>
            <person name="Mikhailova N."/>
            <person name="Lapidus A."/>
            <person name="Chu L."/>
            <person name="Mazur M."/>
            <person name="Goltsman E."/>
            <person name="Larsen N."/>
            <person name="D'Souza M."/>
            <person name="Walunas T."/>
            <person name="Grechkin Y."/>
            <person name="Pusch G."/>
            <person name="Haselkorn R."/>
            <person name="Fonstein M."/>
            <person name="Ehrlich S.D."/>
            <person name="Overbeek R."/>
            <person name="Kyrpides N.C."/>
        </authorList>
    </citation>
    <scope>NUCLEOTIDE SEQUENCE [LARGE SCALE GENOMIC DNA]</scope>
    <source>
        <strain>ATCC 14579 / DSM 31 / CCUG 7414 / JCM 2152 / NBRC 15305 / NCIMB 9373 / NCTC 2599 / NRRL B-3711</strain>
    </source>
</reference>
<protein>
    <recommendedName>
        <fullName evidence="1">Large ribosomal subunit protein bL9</fullName>
    </recommendedName>
    <alternativeName>
        <fullName evidence="2">50S ribosomal protein L9</fullName>
    </alternativeName>
</protein>
<organism>
    <name type="scientific">Bacillus cereus (strain ATCC 14579 / DSM 31 / CCUG 7414 / JCM 2152 / NBRC 15305 / NCIMB 9373 / NCTC 2599 / NRRL B-3711)</name>
    <dbReference type="NCBI Taxonomy" id="226900"/>
    <lineage>
        <taxon>Bacteria</taxon>
        <taxon>Bacillati</taxon>
        <taxon>Bacillota</taxon>
        <taxon>Bacilli</taxon>
        <taxon>Bacillales</taxon>
        <taxon>Bacillaceae</taxon>
        <taxon>Bacillus</taxon>
        <taxon>Bacillus cereus group</taxon>
    </lineage>
</organism>
<evidence type="ECO:0000255" key="1">
    <source>
        <dbReference type="HAMAP-Rule" id="MF_00503"/>
    </source>
</evidence>
<evidence type="ECO:0000305" key="2"/>
<sequence length="148" mass="16384">MKVIFLKDVKGKGKKGEVKNVPDGYANNFLLKQGLAAEATNSSMKTLEAQKRKEEKDAAAELENAKELKETLEKLTVELKAKSGEGGRLFGSITSKQIVDAMQKSHKIKLDKRKFEMDDAIRALGYTNVTVKLHPQVTATVKVHVSEQ</sequence>
<keyword id="KW-1185">Reference proteome</keyword>
<keyword id="KW-0687">Ribonucleoprotein</keyword>
<keyword id="KW-0689">Ribosomal protein</keyword>
<keyword id="KW-0694">RNA-binding</keyword>
<keyword id="KW-0699">rRNA-binding</keyword>
<gene>
    <name evidence="1" type="primary">rplI</name>
    <name type="ordered locus">BC_5471</name>
</gene>
<dbReference type="EMBL" id="AE016877">
    <property type="protein sequence ID" value="AAP12325.1"/>
    <property type="molecule type" value="Genomic_DNA"/>
</dbReference>
<dbReference type="RefSeq" id="NP_835124.1">
    <property type="nucleotide sequence ID" value="NC_004722.1"/>
</dbReference>
<dbReference type="RefSeq" id="WP_000864228.1">
    <property type="nucleotide sequence ID" value="NZ_CP138336.1"/>
</dbReference>
<dbReference type="SMR" id="Q814H0"/>
<dbReference type="STRING" id="226900.BC_5471"/>
<dbReference type="KEGG" id="bce:BC5471"/>
<dbReference type="PATRIC" id="fig|226900.8.peg.5649"/>
<dbReference type="HOGENOM" id="CLU_078938_3_2_9"/>
<dbReference type="OrthoDB" id="9788336at2"/>
<dbReference type="Proteomes" id="UP000001417">
    <property type="component" value="Chromosome"/>
</dbReference>
<dbReference type="GO" id="GO:0022625">
    <property type="term" value="C:cytosolic large ribosomal subunit"/>
    <property type="evidence" value="ECO:0000318"/>
    <property type="project" value="GO_Central"/>
</dbReference>
<dbReference type="GO" id="GO:0019843">
    <property type="term" value="F:rRNA binding"/>
    <property type="evidence" value="ECO:0007669"/>
    <property type="project" value="UniProtKB-UniRule"/>
</dbReference>
<dbReference type="GO" id="GO:0003735">
    <property type="term" value="F:structural constituent of ribosome"/>
    <property type="evidence" value="ECO:0007669"/>
    <property type="project" value="InterPro"/>
</dbReference>
<dbReference type="GO" id="GO:0006412">
    <property type="term" value="P:translation"/>
    <property type="evidence" value="ECO:0007669"/>
    <property type="project" value="UniProtKB-UniRule"/>
</dbReference>
<dbReference type="FunFam" id="3.10.430.100:FF:000002">
    <property type="entry name" value="50S ribosomal protein L9"/>
    <property type="match status" value="1"/>
</dbReference>
<dbReference type="FunFam" id="3.40.5.10:FF:000002">
    <property type="entry name" value="50S ribosomal protein L9"/>
    <property type="match status" value="1"/>
</dbReference>
<dbReference type="Gene3D" id="3.10.430.100">
    <property type="entry name" value="Ribosomal protein L9, C-terminal domain"/>
    <property type="match status" value="1"/>
</dbReference>
<dbReference type="Gene3D" id="3.40.5.10">
    <property type="entry name" value="Ribosomal protein L9, N-terminal domain"/>
    <property type="match status" value="1"/>
</dbReference>
<dbReference type="HAMAP" id="MF_00503">
    <property type="entry name" value="Ribosomal_bL9"/>
    <property type="match status" value="1"/>
</dbReference>
<dbReference type="InterPro" id="IPR000244">
    <property type="entry name" value="Ribosomal_bL9"/>
</dbReference>
<dbReference type="InterPro" id="IPR009027">
    <property type="entry name" value="Ribosomal_bL9/RNase_H1_N"/>
</dbReference>
<dbReference type="InterPro" id="IPR020594">
    <property type="entry name" value="Ribosomal_bL9_bac/chp"/>
</dbReference>
<dbReference type="InterPro" id="IPR020069">
    <property type="entry name" value="Ribosomal_bL9_C"/>
</dbReference>
<dbReference type="InterPro" id="IPR036791">
    <property type="entry name" value="Ribosomal_bL9_C_sf"/>
</dbReference>
<dbReference type="InterPro" id="IPR020070">
    <property type="entry name" value="Ribosomal_bL9_N"/>
</dbReference>
<dbReference type="InterPro" id="IPR036935">
    <property type="entry name" value="Ribosomal_bL9_N_sf"/>
</dbReference>
<dbReference type="NCBIfam" id="TIGR00158">
    <property type="entry name" value="L9"/>
    <property type="match status" value="1"/>
</dbReference>
<dbReference type="PANTHER" id="PTHR21368">
    <property type="entry name" value="50S RIBOSOMAL PROTEIN L9"/>
    <property type="match status" value="1"/>
</dbReference>
<dbReference type="Pfam" id="PF03948">
    <property type="entry name" value="Ribosomal_L9_C"/>
    <property type="match status" value="1"/>
</dbReference>
<dbReference type="Pfam" id="PF01281">
    <property type="entry name" value="Ribosomal_L9_N"/>
    <property type="match status" value="1"/>
</dbReference>
<dbReference type="SUPFAM" id="SSF55658">
    <property type="entry name" value="L9 N-domain-like"/>
    <property type="match status" value="1"/>
</dbReference>
<dbReference type="SUPFAM" id="SSF55653">
    <property type="entry name" value="Ribosomal protein L9 C-domain"/>
    <property type="match status" value="1"/>
</dbReference>
<dbReference type="PROSITE" id="PS00651">
    <property type="entry name" value="RIBOSOMAL_L9"/>
    <property type="match status" value="1"/>
</dbReference>
<feature type="chain" id="PRO_0000236475" description="Large ribosomal subunit protein bL9">
    <location>
        <begin position="1"/>
        <end position="148"/>
    </location>
</feature>
<comment type="function">
    <text evidence="1">Binds to the 23S rRNA.</text>
</comment>
<comment type="similarity">
    <text evidence="1">Belongs to the bacterial ribosomal protein bL9 family.</text>
</comment>
<accession>Q814H0</accession>
<proteinExistence type="inferred from homology"/>